<name>HM38_CAEEL</name>
<proteinExistence type="evidence at transcript level"/>
<feature type="chain" id="PRO_0000202409" description="Homeobox protein ceh-38">
    <location>
        <begin position="1"/>
        <end position="641"/>
    </location>
</feature>
<feature type="DNA-binding region" description="CUT" evidence="3">
    <location>
        <begin position="308"/>
        <end position="394"/>
    </location>
</feature>
<feature type="DNA-binding region" description="Homeobox" evidence="2">
    <location>
        <begin position="427"/>
        <end position="486"/>
    </location>
</feature>
<feature type="region of interest" description="Disordered" evidence="4">
    <location>
        <begin position="1"/>
        <end position="79"/>
    </location>
</feature>
<feature type="region of interest" description="Disordered" evidence="4">
    <location>
        <begin position="129"/>
        <end position="244"/>
    </location>
</feature>
<feature type="region of interest" description="Disordered" evidence="4">
    <location>
        <begin position="398"/>
        <end position="428"/>
    </location>
</feature>
<feature type="region of interest" description="Disordered" evidence="4">
    <location>
        <begin position="485"/>
        <end position="508"/>
    </location>
</feature>
<feature type="region of interest" description="Disordered" evidence="4">
    <location>
        <begin position="552"/>
        <end position="641"/>
    </location>
</feature>
<feature type="compositionally biased region" description="Polar residues" evidence="4">
    <location>
        <begin position="1"/>
        <end position="14"/>
    </location>
</feature>
<feature type="compositionally biased region" description="Polar residues" evidence="4">
    <location>
        <begin position="28"/>
        <end position="38"/>
    </location>
</feature>
<feature type="compositionally biased region" description="Low complexity" evidence="4">
    <location>
        <begin position="52"/>
        <end position="79"/>
    </location>
</feature>
<feature type="compositionally biased region" description="Basic and acidic residues" evidence="4">
    <location>
        <begin position="131"/>
        <end position="140"/>
    </location>
</feature>
<feature type="compositionally biased region" description="Polar residues" evidence="4">
    <location>
        <begin position="167"/>
        <end position="183"/>
    </location>
</feature>
<feature type="compositionally biased region" description="Polar residues" evidence="4">
    <location>
        <begin position="190"/>
        <end position="204"/>
    </location>
</feature>
<feature type="compositionally biased region" description="Acidic residues" evidence="4">
    <location>
        <begin position="571"/>
        <end position="604"/>
    </location>
</feature>
<feature type="compositionally biased region" description="Basic and acidic residues" evidence="4">
    <location>
        <begin position="613"/>
        <end position="626"/>
    </location>
</feature>
<feature type="splice variant" id="VSP_002313" description="In isoform a." evidence="6">
    <original>NSRKQKKPLG</original>
    <variation>S</variation>
    <location>
        <begin position="254"/>
        <end position="263"/>
    </location>
</feature>
<sequence length="641" mass="70816">MESSRTAATSTNGTEKSRRRNTDYLQIDPSSTFINNTGRGFAEELPENFLDTISPHPITPSASTSSATSATEEPATSSAPQLASLAPMSMSSEQPSSSFSSASLLSSSYETIKNEPEFSGSTAGLLSPLHVDSRRRESHDFNTSPYIKEEEDLDGSHLLMGGIRPDTPTNDRSTDLGSISSLLNEDHHTNTIGQSPSPRSTFGSDPTPMIQRQLIKNEDGVSPGSMGFSKNHQGYQKPRNGDRMEYEKAPYQRNSRKQKKPLGLLNQALSSVISTPTISSSNIPTPPSAHIAQPRRIYSTQDSNDPLNAEIGDDIYIDTKDLCKRIAFELKNHSIPQAIFAERILCRSQGTLSDLLRNPKPWNKLKSGRETFRRMYNWVAQPLATRLAILDMKTEDVNRASGMSPPTPAQNVRTHRRSTSDHDGPVSKRPRLVFTDIQKRTLQAIFKETQRPSREMQQTIAEHLRLDLSTVANFFMNARRRSRLGGNIDEPTPFQQVKNISPPPVGDTSDALLNGDDHVPLLNTVMAEMYKEGAIATSNHSAEQREMIERGFGVSIPGPSHSGELLNGDSHEDDEELDELNDSELAYEEDVEIGDEEEEDEEQANGDILPTPKVEELEEKTVIKEEAPDDGEYGATKLAAN</sequence>
<gene>
    <name type="primary">ceh-38</name>
    <name type="ORF">F22D3.1</name>
</gene>
<protein>
    <recommendedName>
        <fullName>Homeobox protein ceh-38</fullName>
    </recommendedName>
</protein>
<evidence type="ECO:0000250" key="1"/>
<evidence type="ECO:0000255" key="2">
    <source>
        <dbReference type="PROSITE-ProRule" id="PRU00108"/>
    </source>
</evidence>
<evidence type="ECO:0000255" key="3">
    <source>
        <dbReference type="PROSITE-ProRule" id="PRU00374"/>
    </source>
</evidence>
<evidence type="ECO:0000256" key="4">
    <source>
        <dbReference type="SAM" id="MobiDB-lite"/>
    </source>
</evidence>
<evidence type="ECO:0000269" key="5">
    <source>
    </source>
</evidence>
<evidence type="ECO:0000305" key="6"/>
<keyword id="KW-0025">Alternative splicing</keyword>
<keyword id="KW-0238">DNA-binding</keyword>
<keyword id="KW-0371">Homeobox</keyword>
<keyword id="KW-0539">Nucleus</keyword>
<keyword id="KW-1185">Reference proteome</keyword>
<keyword id="KW-0804">Transcription</keyword>
<keyword id="KW-0805">Transcription regulation</keyword>
<dbReference type="EMBL" id="FO080140">
    <property type="protein sequence ID" value="CCD61546.1"/>
    <property type="molecule type" value="Genomic_DNA"/>
</dbReference>
<dbReference type="EMBL" id="FO080140">
    <property type="protein sequence ID" value="CCD61547.1"/>
    <property type="molecule type" value="Genomic_DNA"/>
</dbReference>
<dbReference type="RefSeq" id="NP_001367332.1">
    <molecule id="Q19720-1"/>
    <property type="nucleotide sequence ID" value="NM_001381477.2"/>
</dbReference>
<dbReference type="RefSeq" id="NP_741017.1">
    <property type="nucleotide sequence ID" value="NM_171016.3"/>
</dbReference>
<dbReference type="RefSeq" id="NP_741018.1">
    <molecule id="Q19720-2"/>
    <property type="nucleotide sequence ID" value="NM_171852.2"/>
</dbReference>
<dbReference type="SMR" id="Q19720"/>
<dbReference type="BioGRID" id="39474">
    <property type="interactions" value="3"/>
</dbReference>
<dbReference type="FunCoup" id="Q19720">
    <property type="interactions" value="828"/>
</dbReference>
<dbReference type="IntAct" id="Q19720">
    <property type="interactions" value="2"/>
</dbReference>
<dbReference type="STRING" id="6239.F22D3.1d.2"/>
<dbReference type="iPTMnet" id="Q19720"/>
<dbReference type="PaxDb" id="6239-F22D3.1b"/>
<dbReference type="PeptideAtlas" id="Q19720"/>
<dbReference type="EnsemblMetazoa" id="F22D3.1a.1">
    <molecule id="Q19720-2"/>
    <property type="protein sequence ID" value="F22D3.1a.1"/>
    <property type="gene ID" value="WBGene00000459"/>
</dbReference>
<dbReference type="EnsemblMetazoa" id="F22D3.1a.2">
    <molecule id="Q19720-2"/>
    <property type="protein sequence ID" value="F22D3.1a.2"/>
    <property type="gene ID" value="WBGene00000459"/>
</dbReference>
<dbReference type="EnsemblMetazoa" id="F22D3.1b.1">
    <molecule id="Q19720-1"/>
    <property type="protein sequence ID" value="F22D3.1b.1"/>
    <property type="gene ID" value="WBGene00000459"/>
</dbReference>
<dbReference type="EnsemblMetazoa" id="F22D3.1b.2">
    <molecule id="Q19720-1"/>
    <property type="protein sequence ID" value="F22D3.1b.2"/>
    <property type="gene ID" value="WBGene00000459"/>
</dbReference>
<dbReference type="GeneID" id="174136"/>
<dbReference type="KEGG" id="cel:CELE_F22D3.1"/>
<dbReference type="UCSC" id="F22D3.1b">
    <molecule id="Q19720-1"/>
    <property type="organism name" value="c. elegans"/>
</dbReference>
<dbReference type="AGR" id="WB:WBGene00000459"/>
<dbReference type="CTD" id="174136"/>
<dbReference type="WormBase" id="F22D3.1a">
    <molecule id="Q19720-2"/>
    <property type="protein sequence ID" value="CE27137"/>
    <property type="gene ID" value="WBGene00000459"/>
    <property type="gene designation" value="ceh-38"/>
</dbReference>
<dbReference type="WormBase" id="F22D3.1b">
    <molecule id="Q19720-1"/>
    <property type="protein sequence ID" value="CE29772"/>
    <property type="gene ID" value="WBGene00000459"/>
    <property type="gene designation" value="ceh-38"/>
</dbReference>
<dbReference type="eggNOG" id="KOG2252">
    <property type="taxonomic scope" value="Eukaryota"/>
</dbReference>
<dbReference type="GeneTree" id="ENSGT00950000183103"/>
<dbReference type="InParanoid" id="Q19720"/>
<dbReference type="OMA" id="APMSLNT"/>
<dbReference type="OrthoDB" id="10068888at2759"/>
<dbReference type="PRO" id="PR:Q19720"/>
<dbReference type="Proteomes" id="UP000001940">
    <property type="component" value="Chromosome II"/>
</dbReference>
<dbReference type="Bgee" id="WBGene00000459">
    <property type="expression patterns" value="Expressed in pharyngeal muscle cell (C elegans) and 4 other cell types or tissues"/>
</dbReference>
<dbReference type="ExpressionAtlas" id="Q19720">
    <property type="expression patterns" value="baseline and differential"/>
</dbReference>
<dbReference type="GO" id="GO:0005634">
    <property type="term" value="C:nucleus"/>
    <property type="evidence" value="ECO:0000318"/>
    <property type="project" value="GO_Central"/>
</dbReference>
<dbReference type="GO" id="GO:0000981">
    <property type="term" value="F:DNA-binding transcription factor activity, RNA polymerase II-specific"/>
    <property type="evidence" value="ECO:0000318"/>
    <property type="project" value="GO_Central"/>
</dbReference>
<dbReference type="GO" id="GO:0000978">
    <property type="term" value="F:RNA polymerase II cis-regulatory region sequence-specific DNA binding"/>
    <property type="evidence" value="ECO:0000318"/>
    <property type="project" value="GO_Central"/>
</dbReference>
<dbReference type="GO" id="GO:0006357">
    <property type="term" value="P:regulation of transcription by RNA polymerase II"/>
    <property type="evidence" value="ECO:0000318"/>
    <property type="project" value="GO_Central"/>
</dbReference>
<dbReference type="CDD" id="cd00086">
    <property type="entry name" value="homeodomain"/>
    <property type="match status" value="1"/>
</dbReference>
<dbReference type="FunFam" id="1.10.10.60:FF:000054">
    <property type="entry name" value="One cut domain family member"/>
    <property type="match status" value="1"/>
</dbReference>
<dbReference type="FunFam" id="1.10.260.40:FF:000005">
    <property type="entry name" value="One cut domain family member"/>
    <property type="match status" value="1"/>
</dbReference>
<dbReference type="Gene3D" id="1.10.10.60">
    <property type="entry name" value="Homeodomain-like"/>
    <property type="match status" value="1"/>
</dbReference>
<dbReference type="Gene3D" id="1.10.260.40">
    <property type="entry name" value="lambda repressor-like DNA-binding domains"/>
    <property type="match status" value="1"/>
</dbReference>
<dbReference type="InterPro" id="IPR003350">
    <property type="entry name" value="CUT_dom"/>
</dbReference>
<dbReference type="InterPro" id="IPR051649">
    <property type="entry name" value="CUT_Homeobox"/>
</dbReference>
<dbReference type="InterPro" id="IPR001356">
    <property type="entry name" value="HD"/>
</dbReference>
<dbReference type="InterPro" id="IPR009057">
    <property type="entry name" value="Homeodomain-like_sf"/>
</dbReference>
<dbReference type="InterPro" id="IPR010982">
    <property type="entry name" value="Lambda_DNA-bd_dom_sf"/>
</dbReference>
<dbReference type="PANTHER" id="PTHR14057:SF47">
    <property type="entry name" value="HOMEOBOX PROTEIN ONECUT"/>
    <property type="match status" value="1"/>
</dbReference>
<dbReference type="PANTHER" id="PTHR14057">
    <property type="entry name" value="TRANSCRIPTION FACTOR ONECUT"/>
    <property type="match status" value="1"/>
</dbReference>
<dbReference type="Pfam" id="PF02376">
    <property type="entry name" value="CUT"/>
    <property type="match status" value="1"/>
</dbReference>
<dbReference type="Pfam" id="PF00046">
    <property type="entry name" value="Homeodomain"/>
    <property type="match status" value="1"/>
</dbReference>
<dbReference type="SMART" id="SM01109">
    <property type="entry name" value="CUT"/>
    <property type="match status" value="1"/>
</dbReference>
<dbReference type="SMART" id="SM00389">
    <property type="entry name" value="HOX"/>
    <property type="match status" value="1"/>
</dbReference>
<dbReference type="SUPFAM" id="SSF46689">
    <property type="entry name" value="Homeodomain-like"/>
    <property type="match status" value="1"/>
</dbReference>
<dbReference type="SUPFAM" id="SSF47413">
    <property type="entry name" value="lambda repressor-like DNA-binding domains"/>
    <property type="match status" value="1"/>
</dbReference>
<dbReference type="PROSITE" id="PS51042">
    <property type="entry name" value="CUT"/>
    <property type="match status" value="1"/>
</dbReference>
<dbReference type="PROSITE" id="PS50071">
    <property type="entry name" value="HOMEOBOX_2"/>
    <property type="match status" value="1"/>
</dbReference>
<reference key="1">
    <citation type="journal article" date="1998" name="Science">
        <title>Genome sequence of the nematode C. elegans: a platform for investigating biology.</title>
        <authorList>
            <consortium name="The C. elegans sequencing consortium"/>
        </authorList>
    </citation>
    <scope>NUCLEOTIDE SEQUENCE [LARGE SCALE GENOMIC DNA]</scope>
    <scope>ALTERNATIVE SPLICING</scope>
    <source>
        <strain>Bristol N2</strain>
    </source>
</reference>
<reference key="2">
    <citation type="journal article" date="1998" name="Gene">
        <title>Rapid expression screening of Caenorhabditis elegans homeobox open reading frames using a two-step polymerase chain reaction promoter-gfp reporter construction technique.</title>
        <authorList>
            <person name="Cassata G."/>
            <person name="Kagoshima H."/>
            <person name="Pretot R.F."/>
            <person name="Aspoeck G."/>
            <person name="Niklaus G."/>
            <person name="Buerglin T.R."/>
        </authorList>
    </citation>
    <scope>TISSUE SPECIFICITY</scope>
    <scope>DEVELOPMENTAL STAGE</scope>
</reference>
<organism>
    <name type="scientific">Caenorhabditis elegans</name>
    <dbReference type="NCBI Taxonomy" id="6239"/>
    <lineage>
        <taxon>Eukaryota</taxon>
        <taxon>Metazoa</taxon>
        <taxon>Ecdysozoa</taxon>
        <taxon>Nematoda</taxon>
        <taxon>Chromadorea</taxon>
        <taxon>Rhabditida</taxon>
        <taxon>Rhabditina</taxon>
        <taxon>Rhabditomorpha</taxon>
        <taxon>Rhabditoidea</taxon>
        <taxon>Rhabditidae</taxon>
        <taxon>Peloderinae</taxon>
        <taxon>Caenorhabditis</taxon>
    </lineage>
</organism>
<accession>Q19720</accession>
<accession>Q95QJ5</accession>
<comment type="function">
    <text evidence="1">Probable DNA-binding regulatory protein involved in cell-fate specification.</text>
</comment>
<comment type="subcellular location">
    <subcellularLocation>
        <location evidence="2 3">Nucleus</location>
    </subcellularLocation>
</comment>
<comment type="alternative products">
    <event type="alternative splicing"/>
    <isoform>
        <id>Q19720-1</id>
        <name>b</name>
        <sequence type="displayed"/>
    </isoform>
    <isoform>
        <id>Q19720-2</id>
        <name>a</name>
        <sequence type="described" ref="VSP_002313"/>
    </isoform>
</comment>
<comment type="tissue specificity">
    <text evidence="5">Expressed in the embryo. After gastrulation, expressed in almost all cells. During larval and adult stages, expressed in the dorsal and ventral nerve cord, head and tail neurons, pharynx, gut and head.</text>
</comment>
<comment type="developmental stage">
    <text evidence="5">Expression starts during embryogenesis and continues into adulthood.</text>
</comment>
<comment type="similarity">
    <text evidence="6">Belongs to the CUT homeobox family.</text>
</comment>